<name>SACDR_BOVIN</name>
<keyword id="KW-0968">Cytoplasmic vesicle</keyword>
<keyword id="KW-0221">Differentiation</keyword>
<keyword id="KW-0597">Phosphoprotein</keyword>
<keyword id="KW-1185">Reference proteome</keyword>
<keyword id="KW-0744">Spermatogenesis</keyword>
<evidence type="ECO:0000250" key="1">
    <source>
        <dbReference type="UniProtKB" id="Q6AY52"/>
    </source>
</evidence>
<evidence type="ECO:0000250" key="2">
    <source>
        <dbReference type="UniProtKB" id="Q8IZ16"/>
    </source>
</evidence>
<evidence type="ECO:0000256" key="3">
    <source>
        <dbReference type="SAM" id="MobiDB-lite"/>
    </source>
</evidence>
<gene>
    <name type="primary">SPACDR</name>
</gene>
<feature type="chain" id="PRO_0000325781" description="Sperm acrosome developmental regulator">
    <location>
        <begin position="1"/>
        <end position="204"/>
    </location>
</feature>
<feature type="region of interest" description="Disordered" evidence="3">
    <location>
        <begin position="172"/>
        <end position="204"/>
    </location>
</feature>
<feature type="compositionally biased region" description="Basic residues" evidence="3">
    <location>
        <begin position="172"/>
        <end position="184"/>
    </location>
</feature>
<feature type="modified residue" description="Phosphoserine" evidence="1">
    <location>
        <position position="65"/>
    </location>
</feature>
<protein>
    <recommendedName>
        <fullName>Sperm acrosome developmental regulator</fullName>
    </recommendedName>
</protein>
<accession>Q2T9X5</accession>
<reference key="1">
    <citation type="submission" date="2005-12" db="EMBL/GenBank/DDBJ databases">
        <authorList>
            <consortium name="NIH - Mammalian Gene Collection (MGC) project"/>
        </authorList>
    </citation>
    <scope>NUCLEOTIDE SEQUENCE [LARGE SCALE MRNA]</scope>
    <source>
        <strain>Crossbred X Angus</strain>
        <tissue>Liver</tissue>
    </source>
</reference>
<comment type="function">
    <text evidence="2">May play an important role in acrosome formation and nucleus shaping during spermiogenesis.</text>
</comment>
<comment type="subcellular location">
    <subcellularLocation>
        <location evidence="2">Cytoplasmic vesicle</location>
        <location evidence="2">Secretory vesicle</location>
        <location evidence="2">Acrosome</location>
    </subcellularLocation>
    <text evidence="2">Detected in acrosome of round spermatids and spermatozoa.</text>
</comment>
<sequence length="204" mass="23438">MAVVIKFFRWIWQKISRWVFFWKHKAKSVIMDHTDSKKNELKAEKAFKVSETFKLVEPPKEAKVSKMDVSPKVVDPCLLAKTTMDGAAVEAGRRRRSLLKLPQAAVKSVSMLMASALQSGWQMCSWKSSVSSTSVASQMKTRSPLESREAAMLREVYLVLWAIRKQLRQVARRQERRRRHHLRAHMGPQPDPAQGLKQDARSPL</sequence>
<proteinExistence type="evidence at transcript level"/>
<dbReference type="EMBL" id="BC111222">
    <property type="protein sequence ID" value="AAI11223.1"/>
    <property type="molecule type" value="mRNA"/>
</dbReference>
<dbReference type="RefSeq" id="NP_001069954.1">
    <property type="nucleotide sequence ID" value="NM_001076486.2"/>
</dbReference>
<dbReference type="SMR" id="Q2T9X5"/>
<dbReference type="FunCoup" id="Q2T9X5">
    <property type="interactions" value="77"/>
</dbReference>
<dbReference type="STRING" id="9913.ENSBTAP00000022295"/>
<dbReference type="PaxDb" id="9913-ENSBTAP00000022295"/>
<dbReference type="GeneID" id="617958"/>
<dbReference type="KEGG" id="bta:617958"/>
<dbReference type="CTD" id="402573"/>
<dbReference type="eggNOG" id="ENOG502TM6R">
    <property type="taxonomic scope" value="Eukaryota"/>
</dbReference>
<dbReference type="InParanoid" id="Q2T9X5"/>
<dbReference type="OrthoDB" id="9837318at2759"/>
<dbReference type="Proteomes" id="UP000009136">
    <property type="component" value="Unplaced"/>
</dbReference>
<dbReference type="GO" id="GO:0001669">
    <property type="term" value="C:acrosomal vesicle"/>
    <property type="evidence" value="ECO:0000250"/>
    <property type="project" value="UniProtKB"/>
</dbReference>
<dbReference type="GO" id="GO:0007286">
    <property type="term" value="P:spermatid development"/>
    <property type="evidence" value="ECO:0000250"/>
    <property type="project" value="UniProtKB"/>
</dbReference>
<dbReference type="InterPro" id="IPR031534">
    <property type="entry name" value="SPACDR"/>
</dbReference>
<dbReference type="PANTHER" id="PTHR39221">
    <property type="entry name" value="CHROMOSOME 7 OPEN READING FRAME 61"/>
    <property type="match status" value="1"/>
</dbReference>
<dbReference type="PANTHER" id="PTHR39221:SF1">
    <property type="entry name" value="SPERM ACROSOME DEVELOPMENTAL REGULATOR"/>
    <property type="match status" value="1"/>
</dbReference>
<dbReference type="Pfam" id="PF15775">
    <property type="entry name" value="DUF4703"/>
    <property type="match status" value="1"/>
</dbReference>
<organism>
    <name type="scientific">Bos taurus</name>
    <name type="common">Bovine</name>
    <dbReference type="NCBI Taxonomy" id="9913"/>
    <lineage>
        <taxon>Eukaryota</taxon>
        <taxon>Metazoa</taxon>
        <taxon>Chordata</taxon>
        <taxon>Craniata</taxon>
        <taxon>Vertebrata</taxon>
        <taxon>Euteleostomi</taxon>
        <taxon>Mammalia</taxon>
        <taxon>Eutheria</taxon>
        <taxon>Laurasiatheria</taxon>
        <taxon>Artiodactyla</taxon>
        <taxon>Ruminantia</taxon>
        <taxon>Pecora</taxon>
        <taxon>Bovidae</taxon>
        <taxon>Bovinae</taxon>
        <taxon>Bos</taxon>
    </lineage>
</organism>